<reference key="1">
    <citation type="journal article" date="2000" name="Nature">
        <title>Genome sequence of the endocellular bacterial symbiont of aphids Buchnera sp. APS.</title>
        <authorList>
            <person name="Shigenobu S."/>
            <person name="Watanabe H."/>
            <person name="Hattori M."/>
            <person name="Sakaki Y."/>
            <person name="Ishikawa H."/>
        </authorList>
    </citation>
    <scope>NUCLEOTIDE SEQUENCE [LARGE SCALE GENOMIC DNA]</scope>
    <source>
        <strain>APS</strain>
    </source>
</reference>
<protein>
    <recommendedName>
        <fullName evidence="1">Cardiolipin synthase A</fullName>
        <shortName evidence="1">CL synthase</shortName>
        <ecNumber evidence="1">2.7.8.-</ecNumber>
    </recommendedName>
</protein>
<organism>
    <name type="scientific">Buchnera aphidicola subsp. Acyrthosiphon pisum (strain APS)</name>
    <name type="common">Acyrthosiphon pisum symbiotic bacterium</name>
    <dbReference type="NCBI Taxonomy" id="107806"/>
    <lineage>
        <taxon>Bacteria</taxon>
        <taxon>Pseudomonadati</taxon>
        <taxon>Pseudomonadota</taxon>
        <taxon>Gammaproteobacteria</taxon>
        <taxon>Enterobacterales</taxon>
        <taxon>Erwiniaceae</taxon>
        <taxon>Buchnera</taxon>
    </lineage>
</organism>
<evidence type="ECO:0000255" key="1">
    <source>
        <dbReference type="HAMAP-Rule" id="MF_00190"/>
    </source>
</evidence>
<sequence>MDIFYNLIKCLIFSTYWLLIANITFRVLIKRRNIPYSMSWLLTIYIIPFIGISIWFFFGELYLGKRQKKIANRIWSISNKWLHELKSCTYIFQIKNSEVATSIFQLCKNRQGLHGIKSKKIKLLTNTKKIMQILIRDIYLARKNIEMVFYIWKPGGMADDVAIALIDSAKRGIHCRLMLDSAGSIEFFQSPWVEIMRKSGIQVVEALKVNLLRVFLRRVDVRQHRKIILIDNYIAYSGSMNLVDPYLFKKSSEIGQWIDLMTRIEGPIATTMGIIYSCDWEIETGLKILPQLPNKKMLENQSNKNASIQVIASGPGFLKNMIHQALLTAIYSAKRELIITTPYLVPSEDLLEAICTAAQRGVEVSIIIPLYNDSILVKWASRVFFSELLEAGVKIFQFQKGLLHSKSILVDQQLSLIGTVNLDMRSLWLNFEITLVIDDSDFGRNLFCIQNKYISDSQLIDKKAWSMRAYWKRILEKIFYFLSPLL</sequence>
<gene>
    <name evidence="1" type="primary">clsA</name>
    <name type="synonym">cls</name>
    <name type="ordered locus">BU273</name>
</gene>
<name>CLSA_BUCAI</name>
<accession>P57361</accession>
<dbReference type="EC" id="2.7.8.-" evidence="1"/>
<dbReference type="EMBL" id="BA000003">
    <property type="protein sequence ID" value="BAB12983.1"/>
    <property type="molecule type" value="Genomic_DNA"/>
</dbReference>
<dbReference type="RefSeq" id="NP_240097.1">
    <property type="nucleotide sequence ID" value="NC_002528.1"/>
</dbReference>
<dbReference type="RefSeq" id="WP_010896038.1">
    <property type="nucleotide sequence ID" value="NC_002528.1"/>
</dbReference>
<dbReference type="SMR" id="P57361"/>
<dbReference type="STRING" id="563178.BUAP5A_268"/>
<dbReference type="EnsemblBacteria" id="BAB12983">
    <property type="protein sequence ID" value="BAB12983"/>
    <property type="gene ID" value="BAB12983"/>
</dbReference>
<dbReference type="KEGG" id="buc:BU273"/>
<dbReference type="PATRIC" id="fig|107806.10.peg.283"/>
<dbReference type="eggNOG" id="COG1502">
    <property type="taxonomic scope" value="Bacteria"/>
</dbReference>
<dbReference type="HOGENOM" id="CLU_038053_1_0_6"/>
<dbReference type="Proteomes" id="UP000001806">
    <property type="component" value="Chromosome"/>
</dbReference>
<dbReference type="GO" id="GO:0005886">
    <property type="term" value="C:plasma membrane"/>
    <property type="evidence" value="ECO:0007669"/>
    <property type="project" value="UniProtKB-SubCell"/>
</dbReference>
<dbReference type="GO" id="GO:0008808">
    <property type="term" value="F:cardiolipin synthase activity"/>
    <property type="evidence" value="ECO:0007669"/>
    <property type="project" value="InterPro"/>
</dbReference>
<dbReference type="GO" id="GO:0032049">
    <property type="term" value="P:cardiolipin biosynthetic process"/>
    <property type="evidence" value="ECO:0007669"/>
    <property type="project" value="InterPro"/>
</dbReference>
<dbReference type="CDD" id="cd09152">
    <property type="entry name" value="PLDc_EcCLS_like_1"/>
    <property type="match status" value="1"/>
</dbReference>
<dbReference type="CDD" id="cd09158">
    <property type="entry name" value="PLDc_EcCLS_like_2"/>
    <property type="match status" value="1"/>
</dbReference>
<dbReference type="Gene3D" id="3.30.870.10">
    <property type="entry name" value="Endonuclease Chain A"/>
    <property type="match status" value="2"/>
</dbReference>
<dbReference type="HAMAP" id="MF_00190">
    <property type="entry name" value="Cardiolipin_synth_ClsA"/>
    <property type="match status" value="1"/>
</dbReference>
<dbReference type="InterPro" id="IPR022924">
    <property type="entry name" value="Cardiolipin_synthase"/>
</dbReference>
<dbReference type="InterPro" id="IPR030840">
    <property type="entry name" value="CL_synthase_A"/>
</dbReference>
<dbReference type="InterPro" id="IPR027379">
    <property type="entry name" value="CLS_N"/>
</dbReference>
<dbReference type="InterPro" id="IPR025202">
    <property type="entry name" value="PLD-like_dom"/>
</dbReference>
<dbReference type="InterPro" id="IPR001736">
    <property type="entry name" value="PLipase_D/transphosphatidylase"/>
</dbReference>
<dbReference type="NCBIfam" id="TIGR04265">
    <property type="entry name" value="bac_cardiolipin"/>
    <property type="match status" value="1"/>
</dbReference>
<dbReference type="PANTHER" id="PTHR21248">
    <property type="entry name" value="CARDIOLIPIN SYNTHASE"/>
    <property type="match status" value="1"/>
</dbReference>
<dbReference type="PANTHER" id="PTHR21248:SF22">
    <property type="entry name" value="PHOSPHOLIPASE D"/>
    <property type="match status" value="1"/>
</dbReference>
<dbReference type="Pfam" id="PF13091">
    <property type="entry name" value="PLDc_2"/>
    <property type="match status" value="2"/>
</dbReference>
<dbReference type="Pfam" id="PF13396">
    <property type="entry name" value="PLDc_N"/>
    <property type="match status" value="1"/>
</dbReference>
<dbReference type="SMART" id="SM00155">
    <property type="entry name" value="PLDc"/>
    <property type="match status" value="2"/>
</dbReference>
<dbReference type="SUPFAM" id="SSF56024">
    <property type="entry name" value="Phospholipase D/nuclease"/>
    <property type="match status" value="2"/>
</dbReference>
<dbReference type="PROSITE" id="PS50035">
    <property type="entry name" value="PLD"/>
    <property type="match status" value="2"/>
</dbReference>
<feature type="chain" id="PRO_0000201249" description="Cardiolipin synthase A">
    <location>
        <begin position="1"/>
        <end position="486"/>
    </location>
</feature>
<feature type="transmembrane region" description="Helical" evidence="1">
    <location>
        <begin position="3"/>
        <end position="23"/>
    </location>
</feature>
<feature type="transmembrane region" description="Helical" evidence="1">
    <location>
        <begin position="38"/>
        <end position="58"/>
    </location>
</feature>
<feature type="domain" description="PLD phosphodiesterase 1" evidence="1">
    <location>
        <begin position="219"/>
        <end position="246"/>
    </location>
</feature>
<feature type="domain" description="PLD phosphodiesterase 2" evidence="1">
    <location>
        <begin position="399"/>
        <end position="426"/>
    </location>
</feature>
<feature type="active site" evidence="1">
    <location>
        <position position="224"/>
    </location>
</feature>
<feature type="active site" evidence="1">
    <location>
        <position position="226"/>
    </location>
</feature>
<feature type="active site" evidence="1">
    <location>
        <position position="231"/>
    </location>
</feature>
<feature type="active site" evidence="1">
    <location>
        <position position="404"/>
    </location>
</feature>
<feature type="active site" evidence="1">
    <location>
        <position position="406"/>
    </location>
</feature>
<feature type="active site" evidence="1">
    <location>
        <position position="411"/>
    </location>
</feature>
<comment type="function">
    <text evidence="1">Catalyzes the reversible phosphatidyl group transfer from one phosphatidylglycerol molecule to another to form cardiolipin (CL) (diphosphatidylglycerol) and glycerol.</text>
</comment>
<comment type="catalytic activity">
    <reaction evidence="1">
        <text>2 a 1,2-diacyl-sn-glycero-3-phospho-(1'-sn-glycerol) = a cardiolipin + glycerol</text>
        <dbReference type="Rhea" id="RHEA:31451"/>
        <dbReference type="ChEBI" id="CHEBI:17754"/>
        <dbReference type="ChEBI" id="CHEBI:62237"/>
        <dbReference type="ChEBI" id="CHEBI:64716"/>
    </reaction>
</comment>
<comment type="subcellular location">
    <subcellularLocation>
        <location evidence="1">Cell inner membrane</location>
        <topology evidence="1">Multi-pass membrane protein</topology>
    </subcellularLocation>
</comment>
<comment type="similarity">
    <text evidence="1">Belongs to the phospholipase D family. Cardiolipin synthase subfamily. ClsA sub-subfamily.</text>
</comment>
<proteinExistence type="inferred from homology"/>
<keyword id="KW-0997">Cell inner membrane</keyword>
<keyword id="KW-1003">Cell membrane</keyword>
<keyword id="KW-0444">Lipid biosynthesis</keyword>
<keyword id="KW-0443">Lipid metabolism</keyword>
<keyword id="KW-0472">Membrane</keyword>
<keyword id="KW-0594">Phospholipid biosynthesis</keyword>
<keyword id="KW-1208">Phospholipid metabolism</keyword>
<keyword id="KW-1185">Reference proteome</keyword>
<keyword id="KW-0677">Repeat</keyword>
<keyword id="KW-0808">Transferase</keyword>
<keyword id="KW-0812">Transmembrane</keyword>
<keyword id="KW-1133">Transmembrane helix</keyword>